<reference key="1">
    <citation type="journal article" date="2000" name="Dev. Biol.">
        <title>PACSIN2 is a regulator of the metalloprotease/disintegrin ADAM13.</title>
        <authorList>
            <person name="Cousin H."/>
            <person name="Gaultier A."/>
            <person name="Bleux C."/>
            <person name="Darribere T."/>
            <person name="Alfandari D."/>
        </authorList>
    </citation>
    <scope>NUCLEOTIDE SEQUENCE [MRNA]</scope>
    <scope>FUNCTION</scope>
    <scope>SUBCELLULAR LOCATION</scope>
    <scope>TISSUE SPECIFICITY</scope>
</reference>
<reference key="2">
    <citation type="submission" date="2004-05" db="EMBL/GenBank/DDBJ databases">
        <authorList>
            <consortium name="NIH - Xenopus Gene Collection (XGC) project"/>
        </authorList>
    </citation>
    <scope>NUCLEOTIDE SEQUENCE [LARGE SCALE MRNA]</scope>
    <source>
        <tissue>Embryo</tissue>
    </source>
</reference>
<gene>
    <name type="primary">pacsin2</name>
</gene>
<proteinExistence type="evidence at transcript level"/>
<feature type="chain" id="PRO_0000161799" description="Protein kinase C and casein kinase substrate in neurons protein 2">
    <location>
        <begin position="1"/>
        <end position="477"/>
    </location>
</feature>
<feature type="domain" description="F-BAR" evidence="5">
    <location>
        <begin position="11"/>
        <end position="282"/>
    </location>
</feature>
<feature type="domain" description="SH3" evidence="4">
    <location>
        <begin position="417"/>
        <end position="477"/>
    </location>
</feature>
<feature type="region of interest" description="Disordered" evidence="6">
    <location>
        <begin position="163"/>
        <end position="218"/>
    </location>
</feature>
<feature type="region of interest" description="Disordered" evidence="6">
    <location>
        <begin position="314"/>
        <end position="412"/>
    </location>
</feature>
<feature type="coiled-coil region" evidence="1">
    <location>
        <begin position="25"/>
        <end position="274"/>
    </location>
</feature>
<feature type="short sequence motif" description="NPF1">
    <location>
        <begin position="356"/>
        <end position="358"/>
    </location>
</feature>
<feature type="short sequence motif" description="NPF2">
    <location>
        <begin position="396"/>
        <end position="398"/>
    </location>
</feature>
<feature type="short sequence motif" description="NPF3">
    <location>
        <begin position="408"/>
        <end position="410"/>
    </location>
</feature>
<feature type="compositionally biased region" description="Basic and acidic residues" evidence="6">
    <location>
        <begin position="163"/>
        <end position="176"/>
    </location>
</feature>
<feature type="compositionally biased region" description="Basic and acidic residues" evidence="6">
    <location>
        <begin position="186"/>
        <end position="216"/>
    </location>
</feature>
<feature type="compositionally biased region" description="Low complexity" evidence="6">
    <location>
        <begin position="328"/>
        <end position="341"/>
    </location>
</feature>
<feature type="compositionally biased region" description="Polar residues" evidence="6">
    <location>
        <begin position="342"/>
        <end position="357"/>
    </location>
</feature>
<feature type="compositionally biased region" description="Basic and acidic residues" evidence="6">
    <location>
        <begin position="370"/>
        <end position="388"/>
    </location>
</feature>
<feature type="compositionally biased region" description="Polar residues" evidence="6">
    <location>
        <begin position="395"/>
        <end position="407"/>
    </location>
</feature>
<accession>Q9DDA9</accession>
<accession>Q6GR55</accession>
<name>PACN2_XENLA</name>
<keyword id="KW-0965">Cell junction</keyword>
<keyword id="KW-1003">Cell membrane</keyword>
<keyword id="KW-0966">Cell projection</keyword>
<keyword id="KW-0175">Coiled coil</keyword>
<keyword id="KW-0963">Cytoplasm</keyword>
<keyword id="KW-0968">Cytoplasmic vesicle</keyword>
<keyword id="KW-0206">Cytoskeleton</keyword>
<keyword id="KW-0254">Endocytosis</keyword>
<keyword id="KW-0967">Endosome</keyword>
<keyword id="KW-0446">Lipid-binding</keyword>
<keyword id="KW-0472">Membrane</keyword>
<keyword id="KW-0597">Phosphoprotein</keyword>
<keyword id="KW-1185">Reference proteome</keyword>
<keyword id="KW-0728">SH3 domain</keyword>
<comment type="function">
    <text evidence="3 7">Regulates the morphogenesis and endocytosis of caveolae (By similarity). Lipid-binding protein that is able to promote the tubulation of the phosphatidic acid-containing membranes it preferentially binds. Plays a role in intracellular vesicle-mediated transport. Involved in the endocytosis of cell-surface receptors like the EGF receptor, contributing to its internalization in the absence of EGF stimulus.</text>
</comment>
<comment type="subunit">
    <text>Interacts with adam13 through the SH3 domains.</text>
</comment>
<comment type="subcellular location">
    <subcellularLocation>
        <location evidence="3">Cytoplasm</location>
    </subcellularLocation>
    <subcellularLocation>
        <location evidence="3">Cytoplasm</location>
        <location evidence="3">Cytoskeleton</location>
    </subcellularLocation>
    <subcellularLocation>
        <location evidence="7">Cytoplasmic vesicle membrane</location>
        <topology evidence="3">Peripheral membrane protein</topology>
        <orientation evidence="3">Cytoplasmic side</orientation>
    </subcellularLocation>
    <subcellularLocation>
        <location evidence="7">Cell projection</location>
        <location evidence="7">Ruffle membrane</location>
        <topology evidence="3">Peripheral membrane protein</topology>
        <orientation evidence="3">Cytoplasmic side</orientation>
    </subcellularLocation>
    <subcellularLocation>
        <location evidence="3">Early endosome</location>
    </subcellularLocation>
    <subcellularLocation>
        <location evidence="1">Recycling endosome membrane</location>
    </subcellularLocation>
    <subcellularLocation>
        <location evidence="7">Cell membrane</location>
        <topology evidence="3">Peripheral membrane protein</topology>
        <orientation evidence="3">Cytoplasmic side</orientation>
    </subcellularLocation>
    <subcellularLocation>
        <location evidence="2">Cell projection</location>
    </subcellularLocation>
    <subcellularLocation>
        <location evidence="3">Membrane</location>
        <location evidence="3">Caveola</location>
    </subcellularLocation>
    <subcellularLocation>
        <location evidence="3">Cell junction</location>
        <location evidence="3">Adherens junction</location>
    </subcellularLocation>
    <text evidence="3">Detected at the neck of flask-shaped caveolae. Localization to tubular recycling endosomes probably requires interaction with MICALL1 and EHD1.</text>
</comment>
<comment type="tissue specificity">
    <text evidence="7">Ubiquitously expressed with higher expression in the ectoderm, the neuroectoderm, and dorsal mesoderm layers.</text>
</comment>
<comment type="developmental stage">
    <text>Expressed in two-cell stage, early blastula, early gastrula, early neurula and early and late tail bud stages.</text>
</comment>
<comment type="domain">
    <text evidence="2 3">The F-BAR domain forms a coiled coil and mediates membrane-binding and membrane tubulation (By similarity). Autoinhibition of these functions is mediated by an interaction between the SH3 and F-BAR domains (By similarity). The F-Bar domain also mediates the binding to the cell actin cytoskeleton through the interaction with CAV-1 (By similarity).</text>
</comment>
<comment type="PTM">
    <text evidence="3">Phosphorylated.</text>
</comment>
<comment type="similarity">
    <text evidence="8">Belongs to the PACSIN family.</text>
</comment>
<organism>
    <name type="scientific">Xenopus laevis</name>
    <name type="common">African clawed frog</name>
    <dbReference type="NCBI Taxonomy" id="8355"/>
    <lineage>
        <taxon>Eukaryota</taxon>
        <taxon>Metazoa</taxon>
        <taxon>Chordata</taxon>
        <taxon>Craniata</taxon>
        <taxon>Vertebrata</taxon>
        <taxon>Euteleostomi</taxon>
        <taxon>Amphibia</taxon>
        <taxon>Batrachia</taxon>
        <taxon>Anura</taxon>
        <taxon>Pipoidea</taxon>
        <taxon>Pipidae</taxon>
        <taxon>Xenopodinae</taxon>
        <taxon>Xenopus</taxon>
        <taxon>Xenopus</taxon>
    </lineage>
</organism>
<evidence type="ECO:0000250" key="1"/>
<evidence type="ECO:0000250" key="2">
    <source>
        <dbReference type="UniProtKB" id="Q9UNF0"/>
    </source>
</evidence>
<evidence type="ECO:0000250" key="3">
    <source>
        <dbReference type="UniProtKB" id="Q9WVE8"/>
    </source>
</evidence>
<evidence type="ECO:0000255" key="4">
    <source>
        <dbReference type="PROSITE-ProRule" id="PRU00192"/>
    </source>
</evidence>
<evidence type="ECO:0000255" key="5">
    <source>
        <dbReference type="PROSITE-ProRule" id="PRU01077"/>
    </source>
</evidence>
<evidence type="ECO:0000256" key="6">
    <source>
        <dbReference type="SAM" id="MobiDB-lite"/>
    </source>
</evidence>
<evidence type="ECO:0000269" key="7">
    <source>
    </source>
</evidence>
<evidence type="ECO:0000305" key="8"/>
<sequence>MSGTYDDSVGVEVSSDSFWEVGNYKRTVKRIDDGHRLCNDLMNCIHERARIEKVYAQQLTEWAKRWKQLVERGPQYGTVEKAWHNLMTEAEKVSELHLEVKNALMNEDFEKIKNWQKEAFHKQMMGGFKETKEADDGFRKAQKPWAKKLKEVEAAKKSYHAACKEEKLATSRETNSKADPAMNPEQLKKLQDKVEKSKQDSQKTKEKYEKSLKDLDGTTPQYMENMEQVFEQCQQFEDKRLSFFREVLLEVEKHLDLSNVESYASIYRELEYAIKSADAMEDLKWFRNNHGPGMSMNWPQFEDWSADLNRTLSRREKKKPTDGVTLTGISQSGEQSSIQNQHSSHLSVQSAQSTNNPFEDEEETVSINETENKKIENVGSYEKTHPAEWSDDESNNPFNPSDTNGDNNPFDEDALTTLEVRVRALYDYDGQELDELSFKAGEELTKIEDEDEQGWCKGRLEGGQVGLYPANYVESVQ</sequence>
<dbReference type="EMBL" id="AJ277159">
    <property type="protein sequence ID" value="CAC17814.1"/>
    <property type="molecule type" value="mRNA"/>
</dbReference>
<dbReference type="EMBL" id="BC071076">
    <property type="protein sequence ID" value="AAH71076.1"/>
    <property type="molecule type" value="mRNA"/>
</dbReference>
<dbReference type="RefSeq" id="NP_001081950.1">
    <property type="nucleotide sequence ID" value="NM_001088481.1"/>
</dbReference>
<dbReference type="SMR" id="Q9DDA9"/>
<dbReference type="GeneID" id="398138"/>
<dbReference type="KEGG" id="xla:398138"/>
<dbReference type="AGR" id="Xenbase:XB-GENE-489582"/>
<dbReference type="CTD" id="398138"/>
<dbReference type="Xenbase" id="XB-GENE-489582">
    <property type="gene designation" value="pacsin2.S"/>
</dbReference>
<dbReference type="OrthoDB" id="10255128at2759"/>
<dbReference type="Proteomes" id="UP000186698">
    <property type="component" value="Chromosome 3S"/>
</dbReference>
<dbReference type="GO" id="GO:0005912">
    <property type="term" value="C:adherens junction"/>
    <property type="evidence" value="ECO:0007669"/>
    <property type="project" value="UniProtKB-SubCell"/>
</dbReference>
<dbReference type="GO" id="GO:0005901">
    <property type="term" value="C:caveola"/>
    <property type="evidence" value="ECO:0007669"/>
    <property type="project" value="UniProtKB-SubCell"/>
</dbReference>
<dbReference type="GO" id="GO:0005737">
    <property type="term" value="C:cytoplasm"/>
    <property type="evidence" value="ECO:0000318"/>
    <property type="project" value="GO_Central"/>
</dbReference>
<dbReference type="GO" id="GO:0005856">
    <property type="term" value="C:cytoskeleton"/>
    <property type="evidence" value="ECO:0007669"/>
    <property type="project" value="UniProtKB-SubCell"/>
</dbReference>
<dbReference type="GO" id="GO:0005769">
    <property type="term" value="C:early endosome"/>
    <property type="evidence" value="ECO:0007669"/>
    <property type="project" value="UniProtKB-SubCell"/>
</dbReference>
<dbReference type="GO" id="GO:0005768">
    <property type="term" value="C:endosome"/>
    <property type="evidence" value="ECO:0000318"/>
    <property type="project" value="GO_Central"/>
</dbReference>
<dbReference type="GO" id="GO:0055038">
    <property type="term" value="C:recycling endosome membrane"/>
    <property type="evidence" value="ECO:0007669"/>
    <property type="project" value="UniProtKB-SubCell"/>
</dbReference>
<dbReference type="GO" id="GO:0032587">
    <property type="term" value="C:ruffle membrane"/>
    <property type="evidence" value="ECO:0007669"/>
    <property type="project" value="UniProtKB-SubCell"/>
</dbReference>
<dbReference type="GO" id="GO:0070300">
    <property type="term" value="F:phosphatidic acid binding"/>
    <property type="evidence" value="ECO:0000250"/>
    <property type="project" value="UniProtKB"/>
</dbReference>
<dbReference type="GO" id="GO:0005543">
    <property type="term" value="F:phospholipid binding"/>
    <property type="evidence" value="ECO:0000318"/>
    <property type="project" value="GO_Central"/>
</dbReference>
<dbReference type="GO" id="GO:0030036">
    <property type="term" value="P:actin cytoskeleton organization"/>
    <property type="evidence" value="ECO:0007669"/>
    <property type="project" value="InterPro"/>
</dbReference>
<dbReference type="GO" id="GO:0070836">
    <property type="term" value="P:caveola assembly"/>
    <property type="evidence" value="ECO:0007669"/>
    <property type="project" value="InterPro"/>
</dbReference>
<dbReference type="GO" id="GO:0007010">
    <property type="term" value="P:cytoskeleton organization"/>
    <property type="evidence" value="ECO:0000318"/>
    <property type="project" value="GO_Central"/>
</dbReference>
<dbReference type="GO" id="GO:0006897">
    <property type="term" value="P:endocytosis"/>
    <property type="evidence" value="ECO:0007669"/>
    <property type="project" value="UniProtKB-KW"/>
</dbReference>
<dbReference type="GO" id="GO:0097320">
    <property type="term" value="P:plasma membrane tubulation"/>
    <property type="evidence" value="ECO:0000318"/>
    <property type="project" value="GO_Central"/>
</dbReference>
<dbReference type="GO" id="GO:0030100">
    <property type="term" value="P:regulation of endocytosis"/>
    <property type="evidence" value="ECO:0000318"/>
    <property type="project" value="GO_Central"/>
</dbReference>
<dbReference type="CDD" id="cd07679">
    <property type="entry name" value="F-BAR_PACSIN2"/>
    <property type="match status" value="1"/>
</dbReference>
<dbReference type="CDD" id="cd11998">
    <property type="entry name" value="SH3_PACSIN1-2"/>
    <property type="match status" value="1"/>
</dbReference>
<dbReference type="FunFam" id="2.30.30.40:FF:000014">
    <property type="entry name" value="Kinase C and casein kinase substrate in neurons protein"/>
    <property type="match status" value="1"/>
</dbReference>
<dbReference type="FunFam" id="1.20.1270.60:FF:000205">
    <property type="entry name" value="Protein kinase C and casein kinase substrate in neurons protein 1"/>
    <property type="match status" value="1"/>
</dbReference>
<dbReference type="Gene3D" id="1.20.1270.60">
    <property type="entry name" value="Arfaptin homology (AH) domain/BAR domain"/>
    <property type="match status" value="1"/>
</dbReference>
<dbReference type="Gene3D" id="2.30.30.40">
    <property type="entry name" value="SH3 Domains"/>
    <property type="match status" value="1"/>
</dbReference>
<dbReference type="InterPro" id="IPR027267">
    <property type="entry name" value="AH/BAR_dom_sf"/>
</dbReference>
<dbReference type="InterPro" id="IPR031160">
    <property type="entry name" value="F_BAR"/>
</dbReference>
<dbReference type="InterPro" id="IPR001060">
    <property type="entry name" value="FCH_dom"/>
</dbReference>
<dbReference type="InterPro" id="IPR035743">
    <property type="entry name" value="PACSIN1/PACSIN2_SH3"/>
</dbReference>
<dbReference type="InterPro" id="IPR037453">
    <property type="entry name" value="PACSIN2_F-BAR"/>
</dbReference>
<dbReference type="InterPro" id="IPR036028">
    <property type="entry name" value="SH3-like_dom_sf"/>
</dbReference>
<dbReference type="InterPro" id="IPR001452">
    <property type="entry name" value="SH3_domain"/>
</dbReference>
<dbReference type="PANTHER" id="PTHR23065">
    <property type="entry name" value="PROLINE-SERINE-THREONINE PHOSPHATASE INTERACTING PROTEIN 1"/>
    <property type="match status" value="1"/>
</dbReference>
<dbReference type="PANTHER" id="PTHR23065:SF14">
    <property type="entry name" value="PROTEIN KINASE C AND CASEIN KINASE SUBSTRATE IN NEURONS PROTEIN 2"/>
    <property type="match status" value="1"/>
</dbReference>
<dbReference type="Pfam" id="PF00611">
    <property type="entry name" value="FCH"/>
    <property type="match status" value="1"/>
</dbReference>
<dbReference type="Pfam" id="PF14604">
    <property type="entry name" value="SH3_9"/>
    <property type="match status" value="1"/>
</dbReference>
<dbReference type="PRINTS" id="PR00452">
    <property type="entry name" value="SH3DOMAIN"/>
</dbReference>
<dbReference type="SMART" id="SM00055">
    <property type="entry name" value="FCH"/>
    <property type="match status" value="1"/>
</dbReference>
<dbReference type="SMART" id="SM00326">
    <property type="entry name" value="SH3"/>
    <property type="match status" value="1"/>
</dbReference>
<dbReference type="SUPFAM" id="SSF103657">
    <property type="entry name" value="BAR/IMD domain-like"/>
    <property type="match status" value="1"/>
</dbReference>
<dbReference type="SUPFAM" id="SSF50044">
    <property type="entry name" value="SH3-domain"/>
    <property type="match status" value="1"/>
</dbReference>
<dbReference type="PROSITE" id="PS51741">
    <property type="entry name" value="F_BAR"/>
    <property type="match status" value="1"/>
</dbReference>
<dbReference type="PROSITE" id="PS50002">
    <property type="entry name" value="SH3"/>
    <property type="match status" value="1"/>
</dbReference>
<protein>
    <recommendedName>
        <fullName>Protein kinase C and casein kinase substrate in neurons protein 2</fullName>
        <shortName>x-PACSIN2</shortName>
    </recommendedName>
</protein>